<organism>
    <name type="scientific">Mycolicibacterium gilvum (strain PYR-GCK)</name>
    <name type="common">Mycobacterium gilvum (strain PYR-GCK)</name>
    <dbReference type="NCBI Taxonomy" id="350054"/>
    <lineage>
        <taxon>Bacteria</taxon>
        <taxon>Bacillati</taxon>
        <taxon>Actinomycetota</taxon>
        <taxon>Actinomycetes</taxon>
        <taxon>Mycobacteriales</taxon>
        <taxon>Mycobacteriaceae</taxon>
        <taxon>Mycolicibacterium</taxon>
    </lineage>
</organism>
<name>TRPC_MYCGI</name>
<comment type="catalytic activity">
    <reaction evidence="1">
        <text>1-(2-carboxyphenylamino)-1-deoxy-D-ribulose 5-phosphate + H(+) = (1S,2R)-1-C-(indol-3-yl)glycerol 3-phosphate + CO2 + H2O</text>
        <dbReference type="Rhea" id="RHEA:23476"/>
        <dbReference type="ChEBI" id="CHEBI:15377"/>
        <dbReference type="ChEBI" id="CHEBI:15378"/>
        <dbReference type="ChEBI" id="CHEBI:16526"/>
        <dbReference type="ChEBI" id="CHEBI:58613"/>
        <dbReference type="ChEBI" id="CHEBI:58866"/>
        <dbReference type="EC" id="4.1.1.48"/>
    </reaction>
</comment>
<comment type="pathway">
    <text evidence="1">Amino-acid biosynthesis; L-tryptophan biosynthesis; L-tryptophan from chorismate: step 4/5.</text>
</comment>
<comment type="similarity">
    <text evidence="1">Belongs to the TrpC family.</text>
</comment>
<protein>
    <recommendedName>
        <fullName evidence="1">Indole-3-glycerol phosphate synthase</fullName>
        <shortName evidence="1">IGPS</shortName>
        <ecNumber evidence="1">4.1.1.48</ecNumber>
    </recommendedName>
</protein>
<feature type="chain" id="PRO_1000076421" description="Indole-3-glycerol phosphate synthase">
    <location>
        <begin position="1"/>
        <end position="272"/>
    </location>
</feature>
<reference key="1">
    <citation type="submission" date="2007-04" db="EMBL/GenBank/DDBJ databases">
        <title>Complete sequence of chromosome of Mycobacterium gilvum PYR-GCK.</title>
        <authorList>
            <consortium name="US DOE Joint Genome Institute"/>
            <person name="Copeland A."/>
            <person name="Lucas S."/>
            <person name="Lapidus A."/>
            <person name="Barry K."/>
            <person name="Detter J.C."/>
            <person name="Glavina del Rio T."/>
            <person name="Hammon N."/>
            <person name="Israni S."/>
            <person name="Dalin E."/>
            <person name="Tice H."/>
            <person name="Pitluck S."/>
            <person name="Chain P."/>
            <person name="Malfatti S."/>
            <person name="Shin M."/>
            <person name="Vergez L."/>
            <person name="Schmutz J."/>
            <person name="Larimer F."/>
            <person name="Land M."/>
            <person name="Hauser L."/>
            <person name="Kyrpides N."/>
            <person name="Mikhailova N."/>
            <person name="Miller C."/>
            <person name="Richardson P."/>
        </authorList>
    </citation>
    <scope>NUCLEOTIDE SEQUENCE [LARGE SCALE GENOMIC DNA]</scope>
    <source>
        <strain>PYR-GCK</strain>
    </source>
</reference>
<sequence length="272" mass="28172">MGSATVLDSILEGVRADVAAREAVVSLAEVKARAERAPAPLDVMAALRAPGIAVIAEVKRASPSRGELASIADPAELASAYESGGARAISVLTEQRRFNGSLDDLDAVRAAVSIPVLRKDFIVRPYQIHEARAHGADLLLLIVAALEQPALESLLERTESLGMTALVEVHTEEEADRALQAGASLIGVNARNLKTLEVDRDCFARIAPGLPTNVIKIAESGVRGTADLLAYAGAGADGVLVGEGLVTSGDPRSAVADLVTAGTHPSCPKPAR</sequence>
<evidence type="ECO:0000255" key="1">
    <source>
        <dbReference type="HAMAP-Rule" id="MF_00134"/>
    </source>
</evidence>
<keyword id="KW-0028">Amino-acid biosynthesis</keyword>
<keyword id="KW-0057">Aromatic amino acid biosynthesis</keyword>
<keyword id="KW-0210">Decarboxylase</keyword>
<keyword id="KW-0456">Lyase</keyword>
<keyword id="KW-0822">Tryptophan biosynthesis</keyword>
<gene>
    <name evidence="1" type="primary">trpC</name>
    <name type="ordered locus">Mflv_3600</name>
</gene>
<proteinExistence type="inferred from homology"/>
<accession>A4T9N5</accession>
<dbReference type="EC" id="4.1.1.48" evidence="1"/>
<dbReference type="EMBL" id="CP000656">
    <property type="protein sequence ID" value="ABP46074.1"/>
    <property type="molecule type" value="Genomic_DNA"/>
</dbReference>
<dbReference type="SMR" id="A4T9N5"/>
<dbReference type="STRING" id="350054.Mflv_3600"/>
<dbReference type="KEGG" id="mgi:Mflv_3600"/>
<dbReference type="eggNOG" id="COG0134">
    <property type="taxonomic scope" value="Bacteria"/>
</dbReference>
<dbReference type="HOGENOM" id="CLU_034247_0_0_11"/>
<dbReference type="OrthoDB" id="9804217at2"/>
<dbReference type="UniPathway" id="UPA00035">
    <property type="reaction ID" value="UER00043"/>
</dbReference>
<dbReference type="GO" id="GO:0004425">
    <property type="term" value="F:indole-3-glycerol-phosphate synthase activity"/>
    <property type="evidence" value="ECO:0007669"/>
    <property type="project" value="UniProtKB-UniRule"/>
</dbReference>
<dbReference type="GO" id="GO:0004640">
    <property type="term" value="F:phosphoribosylanthranilate isomerase activity"/>
    <property type="evidence" value="ECO:0007669"/>
    <property type="project" value="TreeGrafter"/>
</dbReference>
<dbReference type="GO" id="GO:0000162">
    <property type="term" value="P:L-tryptophan biosynthetic process"/>
    <property type="evidence" value="ECO:0007669"/>
    <property type="project" value="UniProtKB-UniRule"/>
</dbReference>
<dbReference type="CDD" id="cd00331">
    <property type="entry name" value="IGPS"/>
    <property type="match status" value="1"/>
</dbReference>
<dbReference type="FunFam" id="3.20.20.70:FF:000024">
    <property type="entry name" value="Indole-3-glycerol phosphate synthase"/>
    <property type="match status" value="1"/>
</dbReference>
<dbReference type="Gene3D" id="3.20.20.70">
    <property type="entry name" value="Aldolase class I"/>
    <property type="match status" value="1"/>
</dbReference>
<dbReference type="HAMAP" id="MF_00134_A">
    <property type="entry name" value="IGPS_A"/>
    <property type="match status" value="1"/>
</dbReference>
<dbReference type="HAMAP" id="MF_00134_B">
    <property type="entry name" value="IGPS_B"/>
    <property type="match status" value="1"/>
</dbReference>
<dbReference type="InterPro" id="IPR013785">
    <property type="entry name" value="Aldolase_TIM"/>
</dbReference>
<dbReference type="InterPro" id="IPR045186">
    <property type="entry name" value="Indole-3-glycerol_P_synth"/>
</dbReference>
<dbReference type="InterPro" id="IPR013798">
    <property type="entry name" value="Indole-3-glycerol_P_synth_dom"/>
</dbReference>
<dbReference type="InterPro" id="IPR001468">
    <property type="entry name" value="Indole-3-GlycerolPSynthase_CS"/>
</dbReference>
<dbReference type="InterPro" id="IPR011060">
    <property type="entry name" value="RibuloseP-bd_barrel"/>
</dbReference>
<dbReference type="NCBIfam" id="NF001369">
    <property type="entry name" value="PRK00278.1-1"/>
    <property type="match status" value="1"/>
</dbReference>
<dbReference type="NCBIfam" id="NF001377">
    <property type="entry name" value="PRK00278.2-4"/>
    <property type="match status" value="1"/>
</dbReference>
<dbReference type="PANTHER" id="PTHR22854:SF2">
    <property type="entry name" value="INDOLE-3-GLYCEROL-PHOSPHATE SYNTHASE"/>
    <property type="match status" value="1"/>
</dbReference>
<dbReference type="PANTHER" id="PTHR22854">
    <property type="entry name" value="TRYPTOPHAN BIOSYNTHESIS PROTEIN"/>
    <property type="match status" value="1"/>
</dbReference>
<dbReference type="Pfam" id="PF00218">
    <property type="entry name" value="IGPS"/>
    <property type="match status" value="1"/>
</dbReference>
<dbReference type="SUPFAM" id="SSF51366">
    <property type="entry name" value="Ribulose-phoshate binding barrel"/>
    <property type="match status" value="1"/>
</dbReference>
<dbReference type="PROSITE" id="PS00614">
    <property type="entry name" value="IGPS"/>
    <property type="match status" value="1"/>
</dbReference>